<accession>P68160</accession>
<accession>O24083</accession>
<accession>P48908</accession>
<accession>Q6YSP3</accession>
<comment type="function">
    <text evidence="1">Core subunit of the mitochondrial membrane respiratory chain NADH dehydrogenase (Complex I) that is believed to belong to the minimal assembly required for catalysis. Complex I functions in the transfer of electrons from NADH to the respiratory chain. The immediate electron acceptor for the enzyme is believed to be ubiquinone (By similarity).</text>
</comment>
<comment type="catalytic activity">
    <reaction>
        <text>a ubiquinone + NADH + 5 H(+)(in) = a ubiquinol + NAD(+) + 4 H(+)(out)</text>
        <dbReference type="Rhea" id="RHEA:29091"/>
        <dbReference type="Rhea" id="RHEA-COMP:9565"/>
        <dbReference type="Rhea" id="RHEA-COMP:9566"/>
        <dbReference type="ChEBI" id="CHEBI:15378"/>
        <dbReference type="ChEBI" id="CHEBI:16389"/>
        <dbReference type="ChEBI" id="CHEBI:17976"/>
        <dbReference type="ChEBI" id="CHEBI:57540"/>
        <dbReference type="ChEBI" id="CHEBI:57945"/>
        <dbReference type="EC" id="7.1.1.2"/>
    </reaction>
</comment>
<comment type="subcellular location">
    <subcellularLocation>
        <location evidence="1">Mitochondrion membrane</location>
        <topology evidence="1">Multi-pass membrane protein</topology>
    </subcellularLocation>
</comment>
<comment type="RNA editing">
    <location>
        <position position="3" evidence="3 4"/>
    </location>
    <location>
        <position position="9" evidence="3 4"/>
    </location>
    <location>
        <position position="28" evidence="3 4"/>
    </location>
    <location>
        <position position="50" evidence="3 4"/>
    </location>
    <location>
        <position position="71" evidence="3 4"/>
    </location>
    <location>
        <position position="84" evidence="3 4"/>
    </location>
    <location>
        <position position="85" evidence="3 4"/>
    </location>
    <location>
        <position position="116" evidence="3 4"/>
    </location>
    <location>
        <position position="118" evidence="3 4"/>
    </location>
</comment>
<comment type="similarity">
    <text evidence="5">Belongs to the complex I subunit 3 family.</text>
</comment>
<comment type="sequence caution" evidence="5">
    <conflict type="erroneous initiation">
        <sequence resource="EMBL-CDS" id="BAC98895"/>
    </conflict>
</comment>
<dbReference type="EC" id="7.1.1.2"/>
<dbReference type="EMBL" id="X63654">
    <property type="protein sequence ID" value="CAA45193.1"/>
    <property type="status" value="ALT_SEQ"/>
    <property type="molecule type" value="Genomic_DNA"/>
</dbReference>
<dbReference type="EMBL" id="D13697">
    <property type="protein sequence ID" value="BAA02856.1"/>
    <property type="status" value="ALT_SEQ"/>
    <property type="molecule type" value="Genomic_DNA"/>
</dbReference>
<dbReference type="EMBL" id="AP006444">
    <property type="protein sequence ID" value="BAC98895.1"/>
    <property type="status" value="ALT_INIT"/>
    <property type="molecule type" value="Genomic_DNA"/>
</dbReference>
<dbReference type="PIR" id="T09501">
    <property type="entry name" value="T09501"/>
</dbReference>
<dbReference type="PIR" id="T09519">
    <property type="entry name" value="T09519"/>
</dbReference>
<dbReference type="RefSeq" id="YP_717146.1">
    <property type="nucleotide sequence ID" value="NC_008285.1"/>
</dbReference>
<dbReference type="SMR" id="P68160"/>
<dbReference type="GeneID" id="4237970"/>
<dbReference type="KEGG" id="bna:4237970"/>
<dbReference type="OrthoDB" id="154075at2759"/>
<dbReference type="GO" id="GO:0031966">
    <property type="term" value="C:mitochondrial membrane"/>
    <property type="evidence" value="ECO:0007669"/>
    <property type="project" value="UniProtKB-SubCell"/>
</dbReference>
<dbReference type="GO" id="GO:0008137">
    <property type="term" value="F:NADH dehydrogenase (ubiquinone) activity"/>
    <property type="evidence" value="ECO:0007669"/>
    <property type="project" value="UniProtKB-EC"/>
</dbReference>
<dbReference type="FunFam" id="1.20.58.1610:FF:000006">
    <property type="entry name" value="NADH-ubiquinone oxidoreductase chain 3"/>
    <property type="match status" value="1"/>
</dbReference>
<dbReference type="Gene3D" id="1.20.58.1610">
    <property type="entry name" value="NADH:ubiquinone/plastoquinone oxidoreductase, chain 3"/>
    <property type="match status" value="1"/>
</dbReference>
<dbReference type="HAMAP" id="MF_01394">
    <property type="entry name" value="NDH1_NuoA"/>
    <property type="match status" value="1"/>
</dbReference>
<dbReference type="InterPro" id="IPR023043">
    <property type="entry name" value="NAD(P)H_OxRDtase_bac/plastid"/>
</dbReference>
<dbReference type="InterPro" id="IPR000440">
    <property type="entry name" value="NADH_UbQ/plastoQ_OxRdtase_su3"/>
</dbReference>
<dbReference type="InterPro" id="IPR038430">
    <property type="entry name" value="NDAH_ubi_oxred_su3_sf"/>
</dbReference>
<dbReference type="PANTHER" id="PTHR11058">
    <property type="entry name" value="NADH-UBIQUINONE OXIDOREDUCTASE CHAIN 3"/>
    <property type="match status" value="1"/>
</dbReference>
<dbReference type="PANTHER" id="PTHR11058:SF9">
    <property type="entry name" value="NADH-UBIQUINONE OXIDOREDUCTASE CHAIN 3"/>
    <property type="match status" value="1"/>
</dbReference>
<dbReference type="Pfam" id="PF00507">
    <property type="entry name" value="Oxidored_q4"/>
    <property type="match status" value="1"/>
</dbReference>
<protein>
    <recommendedName>
        <fullName>NADH-ubiquinone oxidoreductase chain 3</fullName>
        <ecNumber>7.1.1.2</ecNumber>
    </recommendedName>
    <alternativeName>
        <fullName>NADH dehydrogenase subunit 3</fullName>
    </alternativeName>
</protein>
<sequence>MMLEFAPIFIYLVISLLVSLILLGVPFLFASNSSTYPEKLSAYECGFDPFGDARSRFDIRFYLVSILFLIFDLEVTFFFPWAVSLNKIDLFGFWSMMAFLFILTIGFLYEWKRGALDWE</sequence>
<name>NU3M_BRANA</name>
<feature type="chain" id="PRO_0000117719" description="NADH-ubiquinone oxidoreductase chain 3">
    <location>
        <begin position="1"/>
        <end position="119"/>
    </location>
</feature>
<feature type="transmembrane region" description="Helical" evidence="2">
    <location>
        <begin position="8"/>
        <end position="28"/>
    </location>
</feature>
<feature type="transmembrane region" description="Helical" evidence="2">
    <location>
        <begin position="63"/>
        <end position="83"/>
    </location>
</feature>
<feature type="transmembrane region" description="Helical" evidence="2">
    <location>
        <begin position="88"/>
        <end position="108"/>
    </location>
</feature>
<feature type="sequence conflict" description="In Ref. 1; CAA45193." evidence="5" ref="1">
    <original>L</original>
    <variation>P</variation>
    <location>
        <position position="16"/>
    </location>
</feature>
<feature type="sequence conflict" description="In Ref. 1; CAA45193." evidence="5" ref="1">
    <original>L</original>
    <variation>P</variation>
    <location>
        <position position="22"/>
    </location>
</feature>
<feature type="sequence conflict" description="In Ref. 1; CAA45193." evidence="5" ref="1">
    <original>F</original>
    <variation>S</variation>
    <location>
        <position position="47"/>
    </location>
</feature>
<reference key="1">
    <citation type="submission" date="1992-01" db="EMBL/GenBank/DDBJ databases">
        <authorList>
            <person name="Ye F."/>
            <person name="Bernhardt J."/>
            <person name="Abel W.O."/>
        </authorList>
    </citation>
    <scope>NUCLEOTIDE SEQUENCE [GENOMIC DNA]</scope>
    <source>
        <tissue>Leaf</tissue>
    </source>
</reference>
<reference key="2">
    <citation type="submission" date="1993-07" db="EMBL/GenBank/DDBJ databases">
        <authorList>
            <person name="Handa H."/>
            <person name="Shimizu T."/>
            <person name="Nakajima K."/>
            <person name="Naito T."/>
        </authorList>
    </citation>
    <scope>NUCLEOTIDE SEQUENCE [GENOMIC DNA]</scope>
</reference>
<reference key="3">
    <citation type="journal article" date="1998" name="Curr. Genet.">
        <title>Rapeseed mitochondrial ccb206, a gene involved in cytochrome c biogenesis, is co-transcribed with the nad3 and rps12 genes: organization, transcription, and RNA editing of the nad3/rps12/ccb206 locus.</title>
        <authorList>
            <person name="Itani K."/>
            <person name="Handa H."/>
        </authorList>
    </citation>
    <scope>RNA EDITING</scope>
</reference>
<reference key="4">
    <citation type="journal article" date="2003" name="Nucleic Acids Res.">
        <title>The complete nucleotide sequence and RNA editing content of the mitochondrial genome of rapeseed (Brassica napus L.): comparative analysis of the mitochondrial genomes of rapeseed and Arabidopsis thaliana.</title>
        <authorList>
            <person name="Handa H."/>
        </authorList>
    </citation>
    <scope>RNA EDITING</scope>
    <source>
        <tissue>Leaf</tissue>
    </source>
</reference>
<keyword id="KW-0249">Electron transport</keyword>
<keyword id="KW-0472">Membrane</keyword>
<keyword id="KW-0496">Mitochondrion</keyword>
<keyword id="KW-0520">NAD</keyword>
<keyword id="KW-0679">Respiratory chain</keyword>
<keyword id="KW-0691">RNA editing</keyword>
<keyword id="KW-1278">Translocase</keyword>
<keyword id="KW-0812">Transmembrane</keyword>
<keyword id="KW-1133">Transmembrane helix</keyword>
<keyword id="KW-0813">Transport</keyword>
<keyword id="KW-0830">Ubiquinone</keyword>
<geneLocation type="mitochondrion"/>
<gene>
    <name type="primary">ND3</name>
    <name type="synonym">NAD3</name>
</gene>
<organism>
    <name type="scientific">Brassica napus</name>
    <name type="common">Rape</name>
    <dbReference type="NCBI Taxonomy" id="3708"/>
    <lineage>
        <taxon>Eukaryota</taxon>
        <taxon>Viridiplantae</taxon>
        <taxon>Streptophyta</taxon>
        <taxon>Embryophyta</taxon>
        <taxon>Tracheophyta</taxon>
        <taxon>Spermatophyta</taxon>
        <taxon>Magnoliopsida</taxon>
        <taxon>eudicotyledons</taxon>
        <taxon>Gunneridae</taxon>
        <taxon>Pentapetalae</taxon>
        <taxon>rosids</taxon>
        <taxon>malvids</taxon>
        <taxon>Brassicales</taxon>
        <taxon>Brassicaceae</taxon>
        <taxon>Brassiceae</taxon>
        <taxon>Brassica</taxon>
    </lineage>
</organism>
<proteinExistence type="evidence at transcript level"/>
<evidence type="ECO:0000250" key="1"/>
<evidence type="ECO:0000255" key="2"/>
<evidence type="ECO:0000269" key="3">
    <source>
    </source>
</evidence>
<evidence type="ECO:0000269" key="4">
    <source>
    </source>
</evidence>
<evidence type="ECO:0000305" key="5"/>